<protein>
    <recommendedName>
        <fullName evidence="1">Acyl carrier protein</fullName>
        <shortName evidence="1">ACP</shortName>
    </recommendedName>
</protein>
<comment type="function">
    <text evidence="1">Carrier of the growing fatty acid chain in fatty acid biosynthesis.</text>
</comment>
<comment type="pathway">
    <text evidence="1">Lipid metabolism; fatty acid biosynthesis.</text>
</comment>
<comment type="subcellular location">
    <subcellularLocation>
        <location evidence="1">Cytoplasm</location>
    </subcellularLocation>
</comment>
<comment type="PTM">
    <text evidence="1">4'-phosphopantetheine is transferred from CoA to a specific serine of apo-ACP by AcpS. This modification is essential for activity because fatty acids are bound in thioester linkage to the sulfhydryl of the prosthetic group.</text>
</comment>
<comment type="similarity">
    <text evidence="1">Belongs to the acyl carrier protein (ACP) family.</text>
</comment>
<name>ACP_METC4</name>
<sequence>MSDIAERVKKIVVEHLGVEPEKVTEASNFIDDLGADSLDTVELVMAFEEEFNVEIPDDAAETIQTVGDAIKFLEKNSA</sequence>
<keyword id="KW-0963">Cytoplasm</keyword>
<keyword id="KW-0275">Fatty acid biosynthesis</keyword>
<keyword id="KW-0276">Fatty acid metabolism</keyword>
<keyword id="KW-0444">Lipid biosynthesis</keyword>
<keyword id="KW-0443">Lipid metabolism</keyword>
<keyword id="KW-0596">Phosphopantetheine</keyword>
<keyword id="KW-0597">Phosphoprotein</keyword>
<organism>
    <name type="scientific">Methylorubrum extorquens (strain CM4 / NCIMB 13688)</name>
    <name type="common">Methylobacterium extorquens</name>
    <dbReference type="NCBI Taxonomy" id="440085"/>
    <lineage>
        <taxon>Bacteria</taxon>
        <taxon>Pseudomonadati</taxon>
        <taxon>Pseudomonadota</taxon>
        <taxon>Alphaproteobacteria</taxon>
        <taxon>Hyphomicrobiales</taxon>
        <taxon>Methylobacteriaceae</taxon>
        <taxon>Methylorubrum</taxon>
    </lineage>
</organism>
<gene>
    <name evidence="1" type="primary">acpP</name>
    <name type="ordered locus">Mchl_0493</name>
</gene>
<dbReference type="EMBL" id="CP001298">
    <property type="protein sequence ID" value="ACK81428.1"/>
    <property type="molecule type" value="Genomic_DNA"/>
</dbReference>
<dbReference type="RefSeq" id="WP_003599981.1">
    <property type="nucleotide sequence ID" value="NC_011757.1"/>
</dbReference>
<dbReference type="SMR" id="B7L0F0"/>
<dbReference type="KEGG" id="mch:Mchl_0493"/>
<dbReference type="HOGENOM" id="CLU_108696_5_1_5"/>
<dbReference type="UniPathway" id="UPA00094"/>
<dbReference type="Proteomes" id="UP000002385">
    <property type="component" value="Chromosome"/>
</dbReference>
<dbReference type="GO" id="GO:0005829">
    <property type="term" value="C:cytosol"/>
    <property type="evidence" value="ECO:0007669"/>
    <property type="project" value="TreeGrafter"/>
</dbReference>
<dbReference type="GO" id="GO:0016020">
    <property type="term" value="C:membrane"/>
    <property type="evidence" value="ECO:0007669"/>
    <property type="project" value="GOC"/>
</dbReference>
<dbReference type="GO" id="GO:0000035">
    <property type="term" value="F:acyl binding"/>
    <property type="evidence" value="ECO:0007669"/>
    <property type="project" value="TreeGrafter"/>
</dbReference>
<dbReference type="GO" id="GO:0000036">
    <property type="term" value="F:acyl carrier activity"/>
    <property type="evidence" value="ECO:0007669"/>
    <property type="project" value="UniProtKB-UniRule"/>
</dbReference>
<dbReference type="GO" id="GO:0031177">
    <property type="term" value="F:phosphopantetheine binding"/>
    <property type="evidence" value="ECO:0007669"/>
    <property type="project" value="InterPro"/>
</dbReference>
<dbReference type="GO" id="GO:0009245">
    <property type="term" value="P:lipid A biosynthetic process"/>
    <property type="evidence" value="ECO:0007669"/>
    <property type="project" value="TreeGrafter"/>
</dbReference>
<dbReference type="FunFam" id="1.10.1200.10:FF:000001">
    <property type="entry name" value="Acyl carrier protein"/>
    <property type="match status" value="1"/>
</dbReference>
<dbReference type="Gene3D" id="1.10.1200.10">
    <property type="entry name" value="ACP-like"/>
    <property type="match status" value="1"/>
</dbReference>
<dbReference type="HAMAP" id="MF_01217">
    <property type="entry name" value="Acyl_carrier"/>
    <property type="match status" value="1"/>
</dbReference>
<dbReference type="InterPro" id="IPR003231">
    <property type="entry name" value="ACP"/>
</dbReference>
<dbReference type="InterPro" id="IPR036736">
    <property type="entry name" value="ACP-like_sf"/>
</dbReference>
<dbReference type="InterPro" id="IPR020806">
    <property type="entry name" value="PKS_PP-bd"/>
</dbReference>
<dbReference type="InterPro" id="IPR009081">
    <property type="entry name" value="PP-bd_ACP"/>
</dbReference>
<dbReference type="InterPro" id="IPR006162">
    <property type="entry name" value="Ppantetheine_attach_site"/>
</dbReference>
<dbReference type="NCBIfam" id="TIGR00517">
    <property type="entry name" value="acyl_carrier"/>
    <property type="match status" value="1"/>
</dbReference>
<dbReference type="NCBIfam" id="NF002148">
    <property type="entry name" value="PRK00982.1-2"/>
    <property type="match status" value="1"/>
</dbReference>
<dbReference type="NCBIfam" id="NF002149">
    <property type="entry name" value="PRK00982.1-3"/>
    <property type="match status" value="1"/>
</dbReference>
<dbReference type="NCBIfam" id="NF002150">
    <property type="entry name" value="PRK00982.1-4"/>
    <property type="match status" value="1"/>
</dbReference>
<dbReference type="NCBIfam" id="NF002151">
    <property type="entry name" value="PRK00982.1-5"/>
    <property type="match status" value="1"/>
</dbReference>
<dbReference type="PANTHER" id="PTHR20863">
    <property type="entry name" value="ACYL CARRIER PROTEIN"/>
    <property type="match status" value="1"/>
</dbReference>
<dbReference type="PANTHER" id="PTHR20863:SF76">
    <property type="entry name" value="CARRIER DOMAIN-CONTAINING PROTEIN"/>
    <property type="match status" value="1"/>
</dbReference>
<dbReference type="Pfam" id="PF00550">
    <property type="entry name" value="PP-binding"/>
    <property type="match status" value="1"/>
</dbReference>
<dbReference type="SMART" id="SM00823">
    <property type="entry name" value="PKS_PP"/>
    <property type="match status" value="1"/>
</dbReference>
<dbReference type="SUPFAM" id="SSF47336">
    <property type="entry name" value="ACP-like"/>
    <property type="match status" value="1"/>
</dbReference>
<dbReference type="PROSITE" id="PS50075">
    <property type="entry name" value="CARRIER"/>
    <property type="match status" value="1"/>
</dbReference>
<dbReference type="PROSITE" id="PS00012">
    <property type="entry name" value="PHOSPHOPANTETHEINE"/>
    <property type="match status" value="1"/>
</dbReference>
<feature type="chain" id="PRO_1000164792" description="Acyl carrier protein">
    <location>
        <begin position="1"/>
        <end position="78"/>
    </location>
</feature>
<feature type="domain" description="Carrier" evidence="2">
    <location>
        <begin position="2"/>
        <end position="77"/>
    </location>
</feature>
<feature type="modified residue" description="O-(pantetheine 4'-phosphoryl)serine" evidence="2">
    <location>
        <position position="37"/>
    </location>
</feature>
<evidence type="ECO:0000255" key="1">
    <source>
        <dbReference type="HAMAP-Rule" id="MF_01217"/>
    </source>
</evidence>
<evidence type="ECO:0000255" key="2">
    <source>
        <dbReference type="PROSITE-ProRule" id="PRU00258"/>
    </source>
</evidence>
<proteinExistence type="inferred from homology"/>
<accession>B7L0F0</accession>
<reference key="1">
    <citation type="submission" date="2008-12" db="EMBL/GenBank/DDBJ databases">
        <title>Complete sequence of chromosome of Methylobacterium chloromethanicum CM4.</title>
        <authorList>
            <consortium name="US DOE Joint Genome Institute"/>
            <person name="Lucas S."/>
            <person name="Copeland A."/>
            <person name="Lapidus A."/>
            <person name="Glavina del Rio T."/>
            <person name="Dalin E."/>
            <person name="Tice H."/>
            <person name="Bruce D."/>
            <person name="Goodwin L."/>
            <person name="Pitluck S."/>
            <person name="Chertkov O."/>
            <person name="Brettin T."/>
            <person name="Detter J.C."/>
            <person name="Han C."/>
            <person name="Larimer F."/>
            <person name="Land M."/>
            <person name="Hauser L."/>
            <person name="Kyrpides N."/>
            <person name="Mikhailova N."/>
            <person name="Marx C."/>
            <person name="Richardson P."/>
        </authorList>
    </citation>
    <scope>NUCLEOTIDE SEQUENCE [LARGE SCALE GENOMIC DNA]</scope>
    <source>
        <strain>CM4 / NCIMB 13688</strain>
    </source>
</reference>